<protein>
    <recommendedName>
        <fullName evidence="5">D-apiose import binding protein</fullName>
    </recommendedName>
    <alternativeName>
        <fullName evidence="4">D-apiose binding SBP</fullName>
    </alternativeName>
</protein>
<sequence length="310" mass="33123">MKLLKASLVALSLAASTFVYADNGLIAIITPSHDNPFFKAEADGAKQKAEELGYTTLVASHDDDANKQDQLISTAVSRKAKAIILDNAGSDVTVGALEKAKAAGVPAFLIDREINKTGVAVSQIVSNNYQGAQLSAEKFVELMGEKGQYVELLGRESDTNASVRSQGFHEIIDEYPEMKMVAQQTANWSQTEGFSRMESILQANPNIKGVISGNDTMALGAEAALKAAGRTDVIVVGFDGSDYVRDSILAGGNIKATALQPAWDQAQEAVVQADKYIRTGSTGKEEKQLMDCILIDSSNAKKLNKFSLSK</sequence>
<keyword id="KW-0574">Periplasm</keyword>
<keyword id="KW-1185">Reference proteome</keyword>
<keyword id="KW-0732">Signal</keyword>
<keyword id="KW-0762">Sugar transport</keyword>
<keyword id="KW-0813">Transport</keyword>
<comment type="function">
    <text evidence="3 6">Part of an ABC transporter complex involved in D-apiose import (Probable). Binds D-apiose, D-ribose and D-ribulose (PubMed:29867142).</text>
</comment>
<comment type="subcellular location">
    <subcellularLocation>
        <location evidence="5">Periplasm</location>
    </subcellularLocation>
</comment>
<comment type="similarity">
    <text evidence="5">Belongs to the bacterial solute-binding protein 2 family.</text>
</comment>
<gene>
    <name evidence="7" type="ordered locus">Asuc_0175</name>
</gene>
<reference key="1">
    <citation type="journal article" date="2010" name="BMC Genomics">
        <title>A genomic perspective on the potential of Actinobacillus succinogenes for industrial succinate production.</title>
        <authorList>
            <person name="McKinlay J.B."/>
            <person name="Laivenieks M."/>
            <person name="Schindler B.D."/>
            <person name="McKinlay A.A."/>
            <person name="Siddaramappa S."/>
            <person name="Challacombe J.F."/>
            <person name="Lowry S.R."/>
            <person name="Clum A."/>
            <person name="Lapidus A.L."/>
            <person name="Burkhart K.B."/>
            <person name="Harkins V."/>
            <person name="Vieille C."/>
        </authorList>
    </citation>
    <scope>NUCLEOTIDE SEQUENCE [LARGE SCALE GENOMIC DNA]</scope>
    <source>
        <strain>ATCC 55618 / DSM 22257 / CCUG 43843 / 130Z</strain>
    </source>
</reference>
<reference key="2">
    <citation type="journal article" date="2018" name="Nat. Chem. Biol.">
        <title>Functional assignment of multiple catabolic pathways for D-apiose.</title>
        <authorList>
            <person name="Carter M.S."/>
            <person name="Zhang X."/>
            <person name="Huang H."/>
            <person name="Bouvier J.T."/>
            <person name="Francisco B.S."/>
            <person name="Vetting M.W."/>
            <person name="Al-Obaidi N."/>
            <person name="Bonanno J.B."/>
            <person name="Ghosh A."/>
            <person name="Zallot R.G."/>
            <person name="Andersen H.M."/>
            <person name="Almo S.C."/>
            <person name="Gerlt J.A."/>
        </authorList>
    </citation>
    <scope>FUNCTION</scope>
    <scope>SUBSTRATE-BINDING</scope>
</reference>
<accession>A6VKQ8</accession>
<proteinExistence type="evidence at protein level"/>
<organism>
    <name type="scientific">Actinobacillus succinogenes (strain ATCC 55618 / DSM 22257 / CCUG 43843 / 130Z)</name>
    <dbReference type="NCBI Taxonomy" id="339671"/>
    <lineage>
        <taxon>Bacteria</taxon>
        <taxon>Pseudomonadati</taxon>
        <taxon>Pseudomonadota</taxon>
        <taxon>Gammaproteobacteria</taxon>
        <taxon>Pasteurellales</taxon>
        <taxon>Pasteurellaceae</taxon>
        <taxon>Actinobacillus</taxon>
    </lineage>
</organism>
<dbReference type="EMBL" id="CP000746">
    <property type="protein sequence ID" value="ABR73555.1"/>
    <property type="molecule type" value="Genomic_DNA"/>
</dbReference>
<dbReference type="RefSeq" id="WP_011978831.1">
    <property type="nucleotide sequence ID" value="NC_009655.1"/>
</dbReference>
<dbReference type="SMR" id="A6VKQ8"/>
<dbReference type="STRING" id="339671.Asuc_0175"/>
<dbReference type="KEGG" id="asu:Asuc_0175"/>
<dbReference type="eggNOG" id="COG1879">
    <property type="taxonomic scope" value="Bacteria"/>
</dbReference>
<dbReference type="HOGENOM" id="CLU_037628_3_2_6"/>
<dbReference type="OrthoDB" id="9805127at2"/>
<dbReference type="Proteomes" id="UP000001114">
    <property type="component" value="Chromosome"/>
</dbReference>
<dbReference type="GO" id="GO:0042597">
    <property type="term" value="C:periplasmic space"/>
    <property type="evidence" value="ECO:0007669"/>
    <property type="project" value="UniProtKB-SubCell"/>
</dbReference>
<dbReference type="GO" id="GO:0030246">
    <property type="term" value="F:carbohydrate binding"/>
    <property type="evidence" value="ECO:0007669"/>
    <property type="project" value="UniProtKB-ARBA"/>
</dbReference>
<dbReference type="CDD" id="cd19967">
    <property type="entry name" value="PBP1_TmRBP-like"/>
    <property type="match status" value="1"/>
</dbReference>
<dbReference type="Gene3D" id="3.40.50.2300">
    <property type="match status" value="2"/>
</dbReference>
<dbReference type="InterPro" id="IPR028082">
    <property type="entry name" value="Peripla_BP_I"/>
</dbReference>
<dbReference type="InterPro" id="IPR025997">
    <property type="entry name" value="SBP_2_dom"/>
</dbReference>
<dbReference type="PANTHER" id="PTHR46847">
    <property type="entry name" value="D-ALLOSE-BINDING PERIPLASMIC PROTEIN-RELATED"/>
    <property type="match status" value="1"/>
</dbReference>
<dbReference type="PANTHER" id="PTHR46847:SF1">
    <property type="entry name" value="D-ALLOSE-BINDING PERIPLASMIC PROTEIN-RELATED"/>
    <property type="match status" value="1"/>
</dbReference>
<dbReference type="Pfam" id="PF13407">
    <property type="entry name" value="Peripla_BP_4"/>
    <property type="match status" value="1"/>
</dbReference>
<dbReference type="SUPFAM" id="SSF53822">
    <property type="entry name" value="Periplasmic binding protein-like I"/>
    <property type="match status" value="1"/>
</dbReference>
<evidence type="ECO:0000250" key="1">
    <source>
        <dbReference type="UniProtKB" id="Q2JZQ5"/>
    </source>
</evidence>
<evidence type="ECO:0000255" key="2"/>
<evidence type="ECO:0000269" key="3">
    <source>
    </source>
</evidence>
<evidence type="ECO:0000303" key="4">
    <source>
    </source>
</evidence>
<evidence type="ECO:0000305" key="5"/>
<evidence type="ECO:0000305" key="6">
    <source>
    </source>
</evidence>
<evidence type="ECO:0000312" key="7">
    <source>
        <dbReference type="EMBL" id="ABR73555.1"/>
    </source>
</evidence>
<name>APIBP_ACTSZ</name>
<feature type="signal peptide" evidence="2">
    <location>
        <begin position="1"/>
        <end position="21"/>
    </location>
</feature>
<feature type="chain" id="PRO_5002701886" description="D-apiose import binding protein">
    <location>
        <begin position="22"/>
        <end position="310"/>
    </location>
</feature>
<feature type="binding site" evidence="1">
    <location>
        <position position="35"/>
    </location>
    <ligand>
        <name>D-apiofuranose</name>
        <dbReference type="ChEBI" id="CHEBI:141215"/>
    </ligand>
</feature>
<feature type="binding site" evidence="1">
    <location>
        <begin position="111"/>
        <end position="112"/>
    </location>
    <ligand>
        <name>D-apiofuranose</name>
        <dbReference type="ChEBI" id="CHEBI:141215"/>
    </ligand>
</feature>
<feature type="binding site" evidence="1">
    <location>
        <begin position="158"/>
        <end position="160"/>
    </location>
    <ligand>
        <name>D-apiofuranose</name>
        <dbReference type="ChEBI" id="CHEBI:141215"/>
    </ligand>
</feature>
<feature type="binding site" evidence="1">
    <location>
        <position position="164"/>
    </location>
    <ligand>
        <name>D-apiofuranose</name>
        <dbReference type="ChEBI" id="CHEBI:141215"/>
    </ligand>
</feature>
<feature type="binding site" evidence="1">
    <location>
        <position position="214"/>
    </location>
    <ligand>
        <name>D-apiofuranose</name>
        <dbReference type="ChEBI" id="CHEBI:141215"/>
    </ligand>
</feature>
<feature type="binding site" evidence="1">
    <location>
        <position position="239"/>
    </location>
    <ligand>
        <name>D-apiofuranose</name>
        <dbReference type="ChEBI" id="CHEBI:141215"/>
    </ligand>
</feature>
<feature type="binding site" evidence="1">
    <location>
        <position position="260"/>
    </location>
    <ligand>
        <name>D-apiofuranose</name>
        <dbReference type="ChEBI" id="CHEBI:141215"/>
    </ligand>
</feature>